<accession>B0BC71</accession>
<sequence>MTEIPSSFVLPDPEWIYRVGIGQDSHRFLPDEDPKPCILGGIIFENTPGFEANSDGDVVFHAICNAFSSVTHKGILGGLADELLKTKGITDSVVYLQEAIASLKPTQRVSHLAITIEGKRPKLLPQLPSMRKRIAEVLHIPLDSINITATSGEGLTAMGQGYGVQCFCVLTIMEYCRY</sequence>
<reference key="1">
    <citation type="journal article" date="2008" name="Genome Res.">
        <title>Chlamydia trachomatis: genome sequence analysis of lymphogranuloma venereum isolates.</title>
        <authorList>
            <person name="Thomson N.R."/>
            <person name="Holden M.T.G."/>
            <person name="Carder C."/>
            <person name="Lennard N."/>
            <person name="Lockey S.J."/>
            <person name="Marsh P."/>
            <person name="Skipp P."/>
            <person name="O'Connor C.D."/>
            <person name="Goodhead I."/>
            <person name="Norbertzcak H."/>
            <person name="Harris B."/>
            <person name="Ormond D."/>
            <person name="Rance R."/>
            <person name="Quail M.A."/>
            <person name="Parkhill J."/>
            <person name="Stephens R.S."/>
            <person name="Clarke I.N."/>
        </authorList>
    </citation>
    <scope>NUCLEOTIDE SEQUENCE [LARGE SCALE GENOMIC DNA]</scope>
    <source>
        <strain>UCH-1/proctitis</strain>
    </source>
</reference>
<evidence type="ECO:0000255" key="1">
    <source>
        <dbReference type="HAMAP-Rule" id="MF_00107"/>
    </source>
</evidence>
<protein>
    <recommendedName>
        <fullName evidence="1">2-C-methyl-D-erythritol 2,4-cyclodiphosphate synthase</fullName>
        <shortName evidence="1">MECDP-synthase</shortName>
        <shortName evidence="1">MECPP-synthase</shortName>
        <shortName evidence="1">MECPS</shortName>
        <ecNumber evidence="1">4.6.1.12</ecNumber>
    </recommendedName>
</protein>
<proteinExistence type="inferred from homology"/>
<name>ISPF_CHLTB</name>
<gene>
    <name evidence="1" type="primary">ispF</name>
    <name type="ordered locus">CTLon_0689</name>
</gene>
<keyword id="KW-0414">Isoprene biosynthesis</keyword>
<keyword id="KW-0456">Lyase</keyword>
<keyword id="KW-0479">Metal-binding</keyword>
<dbReference type="EC" id="4.6.1.12" evidence="1"/>
<dbReference type="EMBL" id="AM884177">
    <property type="protein sequence ID" value="CAP07086.1"/>
    <property type="molecule type" value="Genomic_DNA"/>
</dbReference>
<dbReference type="RefSeq" id="WP_012263655.1">
    <property type="nucleotide sequence ID" value="NC_010280.2"/>
</dbReference>
<dbReference type="SMR" id="B0BC71"/>
<dbReference type="KEGG" id="ctl:CTLon_0689"/>
<dbReference type="HOGENOM" id="CLU_084630_2_0_0"/>
<dbReference type="UniPathway" id="UPA00056">
    <property type="reaction ID" value="UER00095"/>
</dbReference>
<dbReference type="Proteomes" id="UP001154401">
    <property type="component" value="Chromosome"/>
</dbReference>
<dbReference type="GO" id="GO:0008685">
    <property type="term" value="F:2-C-methyl-D-erythritol 2,4-cyclodiphosphate synthase activity"/>
    <property type="evidence" value="ECO:0007669"/>
    <property type="project" value="UniProtKB-UniRule"/>
</dbReference>
<dbReference type="GO" id="GO:0046872">
    <property type="term" value="F:metal ion binding"/>
    <property type="evidence" value="ECO:0007669"/>
    <property type="project" value="UniProtKB-KW"/>
</dbReference>
<dbReference type="GO" id="GO:0019288">
    <property type="term" value="P:isopentenyl diphosphate biosynthetic process, methylerythritol 4-phosphate pathway"/>
    <property type="evidence" value="ECO:0007669"/>
    <property type="project" value="UniProtKB-UniRule"/>
</dbReference>
<dbReference type="GO" id="GO:0016114">
    <property type="term" value="P:terpenoid biosynthetic process"/>
    <property type="evidence" value="ECO:0007669"/>
    <property type="project" value="InterPro"/>
</dbReference>
<dbReference type="CDD" id="cd00554">
    <property type="entry name" value="MECDP_synthase"/>
    <property type="match status" value="1"/>
</dbReference>
<dbReference type="FunFam" id="3.30.1330.50:FF:000006">
    <property type="entry name" value="2-C-methyl-D-erythritol 2,4-cyclodiphosphate synthase"/>
    <property type="match status" value="1"/>
</dbReference>
<dbReference type="Gene3D" id="3.30.1330.50">
    <property type="entry name" value="2-C-methyl-D-erythritol 2,4-cyclodiphosphate synthase"/>
    <property type="match status" value="1"/>
</dbReference>
<dbReference type="HAMAP" id="MF_00107">
    <property type="entry name" value="IspF"/>
    <property type="match status" value="1"/>
</dbReference>
<dbReference type="InterPro" id="IPR003526">
    <property type="entry name" value="MECDP_synthase"/>
</dbReference>
<dbReference type="InterPro" id="IPR020555">
    <property type="entry name" value="MECDP_synthase_CS"/>
</dbReference>
<dbReference type="InterPro" id="IPR036571">
    <property type="entry name" value="MECDP_synthase_sf"/>
</dbReference>
<dbReference type="NCBIfam" id="TIGR00151">
    <property type="entry name" value="ispF"/>
    <property type="match status" value="1"/>
</dbReference>
<dbReference type="PANTHER" id="PTHR43181">
    <property type="entry name" value="2-C-METHYL-D-ERYTHRITOL 2,4-CYCLODIPHOSPHATE SYNTHASE, CHLOROPLASTIC"/>
    <property type="match status" value="1"/>
</dbReference>
<dbReference type="PANTHER" id="PTHR43181:SF1">
    <property type="entry name" value="2-C-METHYL-D-ERYTHRITOL 2,4-CYCLODIPHOSPHATE SYNTHASE, CHLOROPLASTIC"/>
    <property type="match status" value="1"/>
</dbReference>
<dbReference type="Pfam" id="PF02542">
    <property type="entry name" value="YgbB"/>
    <property type="match status" value="1"/>
</dbReference>
<dbReference type="SUPFAM" id="SSF69765">
    <property type="entry name" value="IpsF-like"/>
    <property type="match status" value="1"/>
</dbReference>
<dbReference type="PROSITE" id="PS01350">
    <property type="entry name" value="ISPF"/>
    <property type="match status" value="1"/>
</dbReference>
<comment type="function">
    <text evidence="1">Involved in the biosynthesis of isopentenyl diphosphate (IPP) and dimethylallyl diphosphate (DMAPP), two major building blocks of isoprenoid compounds. Catalyzes the conversion of 4-diphosphocytidyl-2-C-methyl-D-erythritol 2-phosphate (CDP-ME2P) to 2-C-methyl-D-erythritol 2,4-cyclodiphosphate (ME-CPP) with a corresponding release of cytidine 5-monophosphate (CMP).</text>
</comment>
<comment type="catalytic activity">
    <reaction evidence="1">
        <text>4-CDP-2-C-methyl-D-erythritol 2-phosphate = 2-C-methyl-D-erythritol 2,4-cyclic diphosphate + CMP</text>
        <dbReference type="Rhea" id="RHEA:23864"/>
        <dbReference type="ChEBI" id="CHEBI:57919"/>
        <dbReference type="ChEBI" id="CHEBI:58483"/>
        <dbReference type="ChEBI" id="CHEBI:60377"/>
        <dbReference type="EC" id="4.6.1.12"/>
    </reaction>
</comment>
<comment type="cofactor">
    <cofactor evidence="1">
        <name>a divalent metal cation</name>
        <dbReference type="ChEBI" id="CHEBI:60240"/>
    </cofactor>
    <text evidence="1">Binds 1 divalent metal cation per subunit.</text>
</comment>
<comment type="pathway">
    <text evidence="1">Isoprenoid biosynthesis; isopentenyl diphosphate biosynthesis via DXP pathway; isopentenyl diphosphate from 1-deoxy-D-xylulose 5-phosphate: step 4/6.</text>
</comment>
<comment type="subunit">
    <text evidence="1">Homotrimer.</text>
</comment>
<comment type="similarity">
    <text evidence="1">Belongs to the IspF family.</text>
</comment>
<feature type="chain" id="PRO_1000094251" description="2-C-methyl-D-erythritol 2,4-cyclodiphosphate synthase">
    <location>
        <begin position="1"/>
        <end position="178"/>
    </location>
</feature>
<feature type="binding site" evidence="1">
    <location>
        <begin position="24"/>
        <end position="26"/>
    </location>
    <ligand>
        <name>4-CDP-2-C-methyl-D-erythritol 2-phosphate</name>
        <dbReference type="ChEBI" id="CHEBI:57919"/>
    </ligand>
</feature>
<feature type="binding site" evidence="1">
    <location>
        <position position="24"/>
    </location>
    <ligand>
        <name>a divalent metal cation</name>
        <dbReference type="ChEBI" id="CHEBI:60240"/>
    </ligand>
</feature>
<feature type="binding site" evidence="1">
    <location>
        <position position="26"/>
    </location>
    <ligand>
        <name>a divalent metal cation</name>
        <dbReference type="ChEBI" id="CHEBI:60240"/>
    </ligand>
</feature>
<feature type="binding site" evidence="1">
    <location>
        <position position="61"/>
    </location>
    <ligand>
        <name>a divalent metal cation</name>
        <dbReference type="ChEBI" id="CHEBI:60240"/>
    </ligand>
</feature>
<feature type="binding site" evidence="1">
    <location>
        <begin position="150"/>
        <end position="153"/>
    </location>
    <ligand>
        <name>4-CDP-2-C-methyl-D-erythritol 2-phosphate</name>
        <dbReference type="ChEBI" id="CHEBI:57919"/>
    </ligand>
</feature>
<feature type="site" description="Transition state stabilizer" evidence="1">
    <location>
        <position position="53"/>
    </location>
</feature>
<feature type="site" description="Transition state stabilizer" evidence="1">
    <location>
        <position position="151"/>
    </location>
</feature>
<organism>
    <name type="scientific">Chlamydia trachomatis serovar L2b (strain UCH-1/proctitis)</name>
    <dbReference type="NCBI Taxonomy" id="471473"/>
    <lineage>
        <taxon>Bacteria</taxon>
        <taxon>Pseudomonadati</taxon>
        <taxon>Chlamydiota</taxon>
        <taxon>Chlamydiia</taxon>
        <taxon>Chlamydiales</taxon>
        <taxon>Chlamydiaceae</taxon>
        <taxon>Chlamydia/Chlamydophila group</taxon>
        <taxon>Chlamydia</taxon>
    </lineage>
</organism>